<accession>A1B047</accession>
<organism>
    <name type="scientific">Paracoccus denitrificans (strain Pd 1222)</name>
    <dbReference type="NCBI Taxonomy" id="318586"/>
    <lineage>
        <taxon>Bacteria</taxon>
        <taxon>Pseudomonadati</taxon>
        <taxon>Pseudomonadota</taxon>
        <taxon>Alphaproteobacteria</taxon>
        <taxon>Rhodobacterales</taxon>
        <taxon>Paracoccaceae</taxon>
        <taxon>Paracoccus</taxon>
    </lineage>
</organism>
<dbReference type="EMBL" id="CP000489">
    <property type="protein sequence ID" value="ABL68891.1"/>
    <property type="molecule type" value="Genomic_DNA"/>
</dbReference>
<dbReference type="RefSeq" id="WP_011747119.1">
    <property type="nucleotide sequence ID" value="NC_008686.1"/>
</dbReference>
<dbReference type="SMR" id="A1B047"/>
<dbReference type="STRING" id="318586.Pden_0779"/>
<dbReference type="EnsemblBacteria" id="ABL68891">
    <property type="protein sequence ID" value="ABL68891"/>
    <property type="gene ID" value="Pden_0779"/>
</dbReference>
<dbReference type="GeneID" id="93452003"/>
<dbReference type="KEGG" id="pde:Pden_0779"/>
<dbReference type="eggNOG" id="COG0200">
    <property type="taxonomic scope" value="Bacteria"/>
</dbReference>
<dbReference type="HOGENOM" id="CLU_055188_4_0_5"/>
<dbReference type="OrthoDB" id="9810293at2"/>
<dbReference type="Proteomes" id="UP000000361">
    <property type="component" value="Chromosome 1"/>
</dbReference>
<dbReference type="GO" id="GO:0015934">
    <property type="term" value="C:large ribosomal subunit"/>
    <property type="evidence" value="ECO:0007669"/>
    <property type="project" value="InterPro"/>
</dbReference>
<dbReference type="GO" id="GO:0019843">
    <property type="term" value="F:rRNA binding"/>
    <property type="evidence" value="ECO:0007669"/>
    <property type="project" value="UniProtKB-UniRule"/>
</dbReference>
<dbReference type="GO" id="GO:0003735">
    <property type="term" value="F:structural constituent of ribosome"/>
    <property type="evidence" value="ECO:0007669"/>
    <property type="project" value="InterPro"/>
</dbReference>
<dbReference type="GO" id="GO:0006412">
    <property type="term" value="P:translation"/>
    <property type="evidence" value="ECO:0007669"/>
    <property type="project" value="UniProtKB-UniRule"/>
</dbReference>
<dbReference type="Gene3D" id="3.100.10.10">
    <property type="match status" value="1"/>
</dbReference>
<dbReference type="HAMAP" id="MF_01341">
    <property type="entry name" value="Ribosomal_uL15"/>
    <property type="match status" value="1"/>
</dbReference>
<dbReference type="InterPro" id="IPR030878">
    <property type="entry name" value="Ribosomal_uL15"/>
</dbReference>
<dbReference type="InterPro" id="IPR021131">
    <property type="entry name" value="Ribosomal_uL15/eL18"/>
</dbReference>
<dbReference type="InterPro" id="IPR036227">
    <property type="entry name" value="Ribosomal_uL15/eL18_sf"/>
</dbReference>
<dbReference type="InterPro" id="IPR005749">
    <property type="entry name" value="Ribosomal_uL15_bac-type"/>
</dbReference>
<dbReference type="InterPro" id="IPR001196">
    <property type="entry name" value="Ribosomal_uL15_CS"/>
</dbReference>
<dbReference type="NCBIfam" id="TIGR01071">
    <property type="entry name" value="rplO_bact"/>
    <property type="match status" value="1"/>
</dbReference>
<dbReference type="PANTHER" id="PTHR12934">
    <property type="entry name" value="50S RIBOSOMAL PROTEIN L15"/>
    <property type="match status" value="1"/>
</dbReference>
<dbReference type="PANTHER" id="PTHR12934:SF11">
    <property type="entry name" value="LARGE RIBOSOMAL SUBUNIT PROTEIN UL15M"/>
    <property type="match status" value="1"/>
</dbReference>
<dbReference type="Pfam" id="PF00828">
    <property type="entry name" value="Ribosomal_L27A"/>
    <property type="match status" value="1"/>
</dbReference>
<dbReference type="SUPFAM" id="SSF52080">
    <property type="entry name" value="Ribosomal proteins L15p and L18e"/>
    <property type="match status" value="1"/>
</dbReference>
<dbReference type="PROSITE" id="PS00475">
    <property type="entry name" value="RIBOSOMAL_L15"/>
    <property type="match status" value="1"/>
</dbReference>
<keyword id="KW-1185">Reference proteome</keyword>
<keyword id="KW-0687">Ribonucleoprotein</keyword>
<keyword id="KW-0689">Ribosomal protein</keyword>
<keyword id="KW-0694">RNA-binding</keyword>
<keyword id="KW-0699">rRNA-binding</keyword>
<sequence length="161" mass="16791">MKLHELHDNPGANRKKKRVARGPGSGKGKTAGRGIKGQTSRSGVALNGYEGGQMPLYRRLPKRGFSKPNRLEFAVVNLGQLQAFVDAGKLDAKADVTEDALVAAGVIRRKLDGVRVLAKGEIKAALNLSVAGASKAAVEAIEKAGGKITVSRPAKEAAAAE</sequence>
<name>RL15_PARDP</name>
<feature type="chain" id="PRO_1000054507" description="Large ribosomal subunit protein uL15">
    <location>
        <begin position="1"/>
        <end position="161"/>
    </location>
</feature>
<feature type="region of interest" description="Disordered" evidence="2">
    <location>
        <begin position="1"/>
        <end position="47"/>
    </location>
</feature>
<feature type="compositionally biased region" description="Gly residues" evidence="2">
    <location>
        <begin position="23"/>
        <end position="35"/>
    </location>
</feature>
<evidence type="ECO:0000255" key="1">
    <source>
        <dbReference type="HAMAP-Rule" id="MF_01341"/>
    </source>
</evidence>
<evidence type="ECO:0000256" key="2">
    <source>
        <dbReference type="SAM" id="MobiDB-lite"/>
    </source>
</evidence>
<evidence type="ECO:0000305" key="3"/>
<gene>
    <name evidence="1" type="primary">rplO</name>
    <name type="ordered locus">Pden_0779</name>
</gene>
<protein>
    <recommendedName>
        <fullName evidence="1">Large ribosomal subunit protein uL15</fullName>
    </recommendedName>
    <alternativeName>
        <fullName evidence="3">50S ribosomal protein L15</fullName>
    </alternativeName>
</protein>
<proteinExistence type="inferred from homology"/>
<comment type="function">
    <text evidence="1">Binds to the 23S rRNA.</text>
</comment>
<comment type="subunit">
    <text evidence="1">Part of the 50S ribosomal subunit.</text>
</comment>
<comment type="similarity">
    <text evidence="1">Belongs to the universal ribosomal protein uL15 family.</text>
</comment>
<reference key="1">
    <citation type="submission" date="2006-12" db="EMBL/GenBank/DDBJ databases">
        <title>Complete sequence of chromosome 1 of Paracoccus denitrificans PD1222.</title>
        <authorList>
            <person name="Copeland A."/>
            <person name="Lucas S."/>
            <person name="Lapidus A."/>
            <person name="Barry K."/>
            <person name="Detter J.C."/>
            <person name="Glavina del Rio T."/>
            <person name="Hammon N."/>
            <person name="Israni S."/>
            <person name="Dalin E."/>
            <person name="Tice H."/>
            <person name="Pitluck S."/>
            <person name="Munk A.C."/>
            <person name="Brettin T."/>
            <person name="Bruce D."/>
            <person name="Han C."/>
            <person name="Tapia R."/>
            <person name="Gilna P."/>
            <person name="Schmutz J."/>
            <person name="Larimer F."/>
            <person name="Land M."/>
            <person name="Hauser L."/>
            <person name="Kyrpides N."/>
            <person name="Lykidis A."/>
            <person name="Spiro S."/>
            <person name="Richardson D.J."/>
            <person name="Moir J.W.B."/>
            <person name="Ferguson S.J."/>
            <person name="van Spanning R.J.M."/>
            <person name="Richardson P."/>
        </authorList>
    </citation>
    <scope>NUCLEOTIDE SEQUENCE [LARGE SCALE GENOMIC DNA]</scope>
    <source>
        <strain>Pd 1222</strain>
    </source>
</reference>